<protein>
    <recommendedName>
        <fullName evidence="6">Kunitz-type protein bli-5</fullName>
    </recommendedName>
    <alternativeName>
        <fullName evidence="8">Blistered cuticle protein 5</fullName>
    </alternativeName>
    <alternativeName>
        <fullName evidence="5">Kunitz-type protease inhibitor bli-5</fullName>
    </alternativeName>
</protein>
<keyword id="KW-1015">Disulfide bond</keyword>
<keyword id="KW-1185">Reference proteome</keyword>
<keyword id="KW-0732">Signal</keyword>
<proteinExistence type="evidence at protein level"/>
<feature type="signal peptide" evidence="1">
    <location>
        <begin position="1"/>
        <end position="20"/>
    </location>
</feature>
<feature type="chain" id="PRO_5004159996" description="Kunitz-type protein bli-5" evidence="1">
    <location>
        <begin position="21"/>
        <end position="202"/>
    </location>
</feature>
<feature type="domain" description="BPTI/Kunitz inhibitor" evidence="2">
    <location>
        <begin position="135"/>
        <end position="184"/>
    </location>
</feature>
<feature type="disulfide bond" evidence="2">
    <location>
        <begin position="135"/>
        <end position="184"/>
    </location>
</feature>
<feature type="disulfide bond" evidence="2">
    <location>
        <begin position="158"/>
        <end position="180"/>
    </location>
</feature>
<feature type="mutagenesis site" description="In 518; blistered cuticle associated with abnormal localization of collagen col-19 in dorso/ventral annulae and lateral alea. Loss of struts separating the external and internal cuticle layers." evidence="3">
    <original>S</original>
    <variation>L</variation>
    <location>
        <position position="56"/>
    </location>
</feature>
<sequence>MVSIHNSFILLMLMISICFCEKCLTNEECDLKWPDAICVRGRCRCSENTIRKKSASREWVCLATNDATGNSGPPLTCPTPEGAGYQVMYRKDGEPVKCSSKKKPDTCPEGFECIQGLSILGALDGVCCPDRAKTCVHPIFDHPDDGYLSRWGFDGEQCIEFKWNPERPSSANNFKTRAHCEDYCIGSINGITNYHQSNFHLF</sequence>
<accession>O62247</accession>
<evidence type="ECO:0000255" key="1"/>
<evidence type="ECO:0000255" key="2">
    <source>
        <dbReference type="PROSITE-ProRule" id="PRU00031"/>
    </source>
</evidence>
<evidence type="ECO:0000269" key="3">
    <source>
    </source>
</evidence>
<evidence type="ECO:0000269" key="4">
    <source>
    </source>
</evidence>
<evidence type="ECO:0000303" key="5">
    <source>
    </source>
</evidence>
<evidence type="ECO:0000305" key="6"/>
<evidence type="ECO:0000312" key="7">
    <source>
        <dbReference type="Proteomes" id="UP000001940"/>
    </source>
</evidence>
<evidence type="ECO:0000312" key="8">
    <source>
        <dbReference type="WormBase" id="F45G2.5"/>
    </source>
</evidence>
<comment type="function">
    <text evidence="3 4">Appears to lack serine protease inhibitor activity in vitro when tested with bovine pancreatic alpha-chymotrypsin and elastase (PubMed:19716386). Involved in cuticle biosynthesis (PubMed:16500660, PubMed:19716386).</text>
</comment>
<comment type="tissue specificity">
    <text evidence="3">Expressed in larval and adult hypodermis, hermaphrodite vulva and adult excretory cell and duct.</text>
</comment>
<comment type="developmental stage">
    <text evidence="4">Expressed at low levels in larvae and adults. Expression increases during L2-L3 molting stage an prior L3-L4 molting stage.</text>
</comment>
<comment type="disruption phenotype">
    <text evidence="3 4">RNAi-mediated knockdown causes blisters in the cuticle and abnormal localization of collagen col-19 in cuticle dorso/ventral annulae and lateral alea.</text>
</comment>
<comment type="caution">
    <text evidence="4 6">Appears to have serine protease activity in vitro (PubMed:19716386). However, it is uncertain if this activity is genuine as bli-5 lacks all the catalytic features of serine proteases.</text>
</comment>
<organism evidence="7">
    <name type="scientific">Caenorhabditis elegans</name>
    <dbReference type="NCBI Taxonomy" id="6239"/>
    <lineage>
        <taxon>Eukaryota</taxon>
        <taxon>Metazoa</taxon>
        <taxon>Ecdysozoa</taxon>
        <taxon>Nematoda</taxon>
        <taxon>Chromadorea</taxon>
        <taxon>Rhabditida</taxon>
        <taxon>Rhabditina</taxon>
        <taxon>Rhabditomorpha</taxon>
        <taxon>Rhabditoidea</taxon>
        <taxon>Rhabditidae</taxon>
        <taxon>Peloderinae</taxon>
        <taxon>Caenorhabditis</taxon>
    </lineage>
</organism>
<gene>
    <name evidence="8" type="primary">bli-5</name>
    <name evidence="8" type="ORF">F45G2.5</name>
</gene>
<reference evidence="7" key="1">
    <citation type="journal article" date="1998" name="Science">
        <title>Genome sequence of the nematode C. elegans: a platform for investigating biology.</title>
        <authorList>
            <consortium name="The C. elegans sequencing consortium"/>
        </authorList>
    </citation>
    <scope>NUCLEOTIDE SEQUENCE [LARGE SCALE GENOMIC DNA]</scope>
    <source>
        <strain evidence="7">Bristol N2</strain>
    </source>
</reference>
<reference evidence="6" key="2">
    <citation type="journal article" date="2006" name="Int. J. Parasitol.">
        <title>Biosynthesis and enzymology of the Caenorhabditis elegans cuticle: identification and characterization of a novel serine protease inhibitor.</title>
        <authorList>
            <person name="Page A.P."/>
            <person name="McCormack G."/>
            <person name="Birnie A.J."/>
        </authorList>
    </citation>
    <scope>FUNCTION</scope>
    <scope>TISSUE SPECIFICITY</scope>
    <scope>DISRUPTION PHENOTYPE</scope>
    <scope>MUTAGENESIS OF SER-56</scope>
</reference>
<reference evidence="6" key="3">
    <citation type="journal article" date="2010" name="Mol. Biochem. Parasitol.">
        <title>The kunitz domain protein BLI-5 plays a functionally conserved role in cuticle formation in a diverse range of nematodes.</title>
        <authorList>
            <person name="Stepek G."/>
            <person name="McCormack G."/>
            <person name="Page A.P."/>
        </authorList>
    </citation>
    <scope>FUNCTION</scope>
    <scope>DEVELOPMENTAL STAGE</scope>
    <scope>DISRUPTION PHENOTYPE</scope>
</reference>
<name>BLI5_CAEEL</name>
<dbReference type="EMBL" id="BX284603">
    <property type="protein sequence ID" value="CAB07614.1"/>
    <property type="molecule type" value="Genomic_DNA"/>
</dbReference>
<dbReference type="PIR" id="T22237">
    <property type="entry name" value="T22237"/>
</dbReference>
<dbReference type="RefSeq" id="NP_499772.1">
    <property type="nucleotide sequence ID" value="NM_067371.3"/>
</dbReference>
<dbReference type="SMR" id="O62247"/>
<dbReference type="FunCoup" id="O62247">
    <property type="interactions" value="297"/>
</dbReference>
<dbReference type="STRING" id="6239.F45G2.5.1"/>
<dbReference type="PaxDb" id="6239-F45G2.5"/>
<dbReference type="EnsemblMetazoa" id="F45G2.5.1">
    <property type="protein sequence ID" value="F45G2.5.1"/>
    <property type="gene ID" value="WBGene00000255"/>
</dbReference>
<dbReference type="GeneID" id="185812"/>
<dbReference type="KEGG" id="cel:CELE_F45G2.5"/>
<dbReference type="AGR" id="WB:WBGene00000255"/>
<dbReference type="CTD" id="185812"/>
<dbReference type="WormBase" id="F45G2.5">
    <property type="protein sequence ID" value="CE16048"/>
    <property type="gene ID" value="WBGene00000255"/>
    <property type="gene designation" value="bli-5"/>
</dbReference>
<dbReference type="eggNOG" id="KOG4295">
    <property type="taxonomic scope" value="Eukaryota"/>
</dbReference>
<dbReference type="HOGENOM" id="CLU_1373315_0_0_1"/>
<dbReference type="InParanoid" id="O62247"/>
<dbReference type="OMA" id="SREWVCL"/>
<dbReference type="OrthoDB" id="5770917at2759"/>
<dbReference type="PhylomeDB" id="O62247"/>
<dbReference type="PRO" id="PR:O62247"/>
<dbReference type="Proteomes" id="UP000001940">
    <property type="component" value="Chromosome III"/>
</dbReference>
<dbReference type="Bgee" id="WBGene00000255">
    <property type="expression patterns" value="Expressed in material anatomical entity and 4 other cell types or tissues"/>
</dbReference>
<dbReference type="GO" id="GO:0004252">
    <property type="term" value="F:serine-type endopeptidase activity"/>
    <property type="evidence" value="ECO:0000314"/>
    <property type="project" value="WormBase"/>
</dbReference>
<dbReference type="GO" id="GO:0004867">
    <property type="term" value="F:serine-type endopeptidase inhibitor activity"/>
    <property type="evidence" value="ECO:0007669"/>
    <property type="project" value="InterPro"/>
</dbReference>
<dbReference type="GO" id="GO:0042329">
    <property type="term" value="F:structural constituent of collagen and cuticulin-based cuticle"/>
    <property type="evidence" value="ECO:0000314"/>
    <property type="project" value="WormBase"/>
</dbReference>
<dbReference type="GO" id="GO:0042338">
    <property type="term" value="P:cuticle development involved in collagen and cuticulin-based cuticle molting cycle"/>
    <property type="evidence" value="ECO:0000315"/>
    <property type="project" value="UniProtKB"/>
</dbReference>
<dbReference type="GO" id="GO:0030163">
    <property type="term" value="P:protein catabolic process"/>
    <property type="evidence" value="ECO:0000314"/>
    <property type="project" value="WormBase"/>
</dbReference>
<dbReference type="GO" id="GO:0040025">
    <property type="term" value="P:vulval development"/>
    <property type="evidence" value="ECO:0000315"/>
    <property type="project" value="UniProtKB"/>
</dbReference>
<dbReference type="Gene3D" id="4.10.410.10">
    <property type="entry name" value="Pancreatic trypsin inhibitor Kunitz domain"/>
    <property type="match status" value="1"/>
</dbReference>
<dbReference type="InterPro" id="IPR053014">
    <property type="entry name" value="Cuticle_assoc_divergent"/>
</dbReference>
<dbReference type="InterPro" id="IPR002223">
    <property type="entry name" value="Kunitz_BPTI"/>
</dbReference>
<dbReference type="InterPro" id="IPR036880">
    <property type="entry name" value="Kunitz_BPTI_sf"/>
</dbReference>
<dbReference type="InterPro" id="IPR028150">
    <property type="entry name" value="Lustrin_cystein"/>
</dbReference>
<dbReference type="PANTHER" id="PTHR46339">
    <property type="entry name" value="PROTEIN CBG15282-RELATED"/>
    <property type="match status" value="1"/>
</dbReference>
<dbReference type="Pfam" id="PF00014">
    <property type="entry name" value="Kunitz_BPTI"/>
    <property type="match status" value="1"/>
</dbReference>
<dbReference type="Pfam" id="PF14625">
    <property type="entry name" value="Lustrin_cystein"/>
    <property type="match status" value="1"/>
</dbReference>
<dbReference type="SMART" id="SM00131">
    <property type="entry name" value="KU"/>
    <property type="match status" value="1"/>
</dbReference>
<dbReference type="SUPFAM" id="SSF57362">
    <property type="entry name" value="BPTI-like"/>
    <property type="match status" value="1"/>
</dbReference>